<name>SPRY4_MOUSE</name>
<reference key="1">
    <citation type="journal article" date="2005" name="Science">
        <title>The transcriptional landscape of the mammalian genome.</title>
        <authorList>
            <person name="Carninci P."/>
            <person name="Kasukawa T."/>
            <person name="Katayama S."/>
            <person name="Gough J."/>
            <person name="Frith M.C."/>
            <person name="Maeda N."/>
            <person name="Oyama R."/>
            <person name="Ravasi T."/>
            <person name="Lenhard B."/>
            <person name="Wells C."/>
            <person name="Kodzius R."/>
            <person name="Shimokawa K."/>
            <person name="Bajic V.B."/>
            <person name="Brenner S.E."/>
            <person name="Batalov S."/>
            <person name="Forrest A.R."/>
            <person name="Zavolan M."/>
            <person name="Davis M.J."/>
            <person name="Wilming L.G."/>
            <person name="Aidinis V."/>
            <person name="Allen J.E."/>
            <person name="Ambesi-Impiombato A."/>
            <person name="Apweiler R."/>
            <person name="Aturaliya R.N."/>
            <person name="Bailey T.L."/>
            <person name="Bansal M."/>
            <person name="Baxter L."/>
            <person name="Beisel K.W."/>
            <person name="Bersano T."/>
            <person name="Bono H."/>
            <person name="Chalk A.M."/>
            <person name="Chiu K.P."/>
            <person name="Choudhary V."/>
            <person name="Christoffels A."/>
            <person name="Clutterbuck D.R."/>
            <person name="Crowe M.L."/>
            <person name="Dalla E."/>
            <person name="Dalrymple B.P."/>
            <person name="de Bono B."/>
            <person name="Della Gatta G."/>
            <person name="di Bernardo D."/>
            <person name="Down T."/>
            <person name="Engstrom P."/>
            <person name="Fagiolini M."/>
            <person name="Faulkner G."/>
            <person name="Fletcher C.F."/>
            <person name="Fukushima T."/>
            <person name="Furuno M."/>
            <person name="Futaki S."/>
            <person name="Gariboldi M."/>
            <person name="Georgii-Hemming P."/>
            <person name="Gingeras T.R."/>
            <person name="Gojobori T."/>
            <person name="Green R.E."/>
            <person name="Gustincich S."/>
            <person name="Harbers M."/>
            <person name="Hayashi Y."/>
            <person name="Hensch T.K."/>
            <person name="Hirokawa N."/>
            <person name="Hill D."/>
            <person name="Huminiecki L."/>
            <person name="Iacono M."/>
            <person name="Ikeo K."/>
            <person name="Iwama A."/>
            <person name="Ishikawa T."/>
            <person name="Jakt M."/>
            <person name="Kanapin A."/>
            <person name="Katoh M."/>
            <person name="Kawasawa Y."/>
            <person name="Kelso J."/>
            <person name="Kitamura H."/>
            <person name="Kitano H."/>
            <person name="Kollias G."/>
            <person name="Krishnan S.P."/>
            <person name="Kruger A."/>
            <person name="Kummerfeld S.K."/>
            <person name="Kurochkin I.V."/>
            <person name="Lareau L.F."/>
            <person name="Lazarevic D."/>
            <person name="Lipovich L."/>
            <person name="Liu J."/>
            <person name="Liuni S."/>
            <person name="McWilliam S."/>
            <person name="Madan Babu M."/>
            <person name="Madera M."/>
            <person name="Marchionni L."/>
            <person name="Matsuda H."/>
            <person name="Matsuzawa S."/>
            <person name="Miki H."/>
            <person name="Mignone F."/>
            <person name="Miyake S."/>
            <person name="Morris K."/>
            <person name="Mottagui-Tabar S."/>
            <person name="Mulder N."/>
            <person name="Nakano N."/>
            <person name="Nakauchi H."/>
            <person name="Ng P."/>
            <person name="Nilsson R."/>
            <person name="Nishiguchi S."/>
            <person name="Nishikawa S."/>
            <person name="Nori F."/>
            <person name="Ohara O."/>
            <person name="Okazaki Y."/>
            <person name="Orlando V."/>
            <person name="Pang K.C."/>
            <person name="Pavan W.J."/>
            <person name="Pavesi G."/>
            <person name="Pesole G."/>
            <person name="Petrovsky N."/>
            <person name="Piazza S."/>
            <person name="Reed J."/>
            <person name="Reid J.F."/>
            <person name="Ring B.Z."/>
            <person name="Ringwald M."/>
            <person name="Rost B."/>
            <person name="Ruan Y."/>
            <person name="Salzberg S.L."/>
            <person name="Sandelin A."/>
            <person name="Schneider C."/>
            <person name="Schoenbach C."/>
            <person name="Sekiguchi K."/>
            <person name="Semple C.A."/>
            <person name="Seno S."/>
            <person name="Sessa L."/>
            <person name="Sheng Y."/>
            <person name="Shibata Y."/>
            <person name="Shimada H."/>
            <person name="Shimada K."/>
            <person name="Silva D."/>
            <person name="Sinclair B."/>
            <person name="Sperling S."/>
            <person name="Stupka E."/>
            <person name="Sugiura K."/>
            <person name="Sultana R."/>
            <person name="Takenaka Y."/>
            <person name="Taki K."/>
            <person name="Tammoja K."/>
            <person name="Tan S.L."/>
            <person name="Tang S."/>
            <person name="Taylor M.S."/>
            <person name="Tegner J."/>
            <person name="Teichmann S.A."/>
            <person name="Ueda H.R."/>
            <person name="van Nimwegen E."/>
            <person name="Verardo R."/>
            <person name="Wei C.L."/>
            <person name="Yagi K."/>
            <person name="Yamanishi H."/>
            <person name="Zabarovsky E."/>
            <person name="Zhu S."/>
            <person name="Zimmer A."/>
            <person name="Hide W."/>
            <person name="Bult C."/>
            <person name="Grimmond S.M."/>
            <person name="Teasdale R.D."/>
            <person name="Liu E.T."/>
            <person name="Brusic V."/>
            <person name="Quackenbush J."/>
            <person name="Wahlestedt C."/>
            <person name="Mattick J.S."/>
            <person name="Hume D.A."/>
            <person name="Kai C."/>
            <person name="Sasaki D."/>
            <person name="Tomaru Y."/>
            <person name="Fukuda S."/>
            <person name="Kanamori-Katayama M."/>
            <person name="Suzuki M."/>
            <person name="Aoki J."/>
            <person name="Arakawa T."/>
            <person name="Iida J."/>
            <person name="Imamura K."/>
            <person name="Itoh M."/>
            <person name="Kato T."/>
            <person name="Kawaji H."/>
            <person name="Kawagashira N."/>
            <person name="Kawashima T."/>
            <person name="Kojima M."/>
            <person name="Kondo S."/>
            <person name="Konno H."/>
            <person name="Nakano K."/>
            <person name="Ninomiya N."/>
            <person name="Nishio T."/>
            <person name="Okada M."/>
            <person name="Plessy C."/>
            <person name="Shibata K."/>
            <person name="Shiraki T."/>
            <person name="Suzuki S."/>
            <person name="Tagami M."/>
            <person name="Waki K."/>
            <person name="Watahiki A."/>
            <person name="Okamura-Oho Y."/>
            <person name="Suzuki H."/>
            <person name="Kawai J."/>
            <person name="Hayashizaki Y."/>
        </authorList>
    </citation>
    <scope>NUCLEOTIDE SEQUENCE [LARGE SCALE MRNA]</scope>
    <source>
        <strain>C57BL/6J</strain>
        <tissue>Embryonic stem cell</tissue>
        <tissue>Retina</tissue>
        <tissue>Skin</tissue>
    </source>
</reference>
<reference key="2">
    <citation type="journal article" date="2004" name="Genome Res.">
        <title>The status, quality, and expansion of the NIH full-length cDNA project: the Mammalian Gene Collection (MGC).</title>
        <authorList>
            <consortium name="The MGC Project Team"/>
        </authorList>
    </citation>
    <scope>NUCLEOTIDE SEQUENCE [LARGE SCALE MRNA]</scope>
    <source>
        <strain>FVB/N</strain>
        <tissue>Salivary gland</tissue>
    </source>
</reference>
<reference key="3">
    <citation type="journal article" date="2010" name="Cell">
        <title>A tissue-specific atlas of mouse protein phosphorylation and expression.</title>
        <authorList>
            <person name="Huttlin E.L."/>
            <person name="Jedrychowski M.P."/>
            <person name="Elias J.E."/>
            <person name="Goswami T."/>
            <person name="Rad R."/>
            <person name="Beausoleil S.A."/>
            <person name="Villen J."/>
            <person name="Haas W."/>
            <person name="Sowa M.E."/>
            <person name="Gygi S.P."/>
        </authorList>
    </citation>
    <scope>IDENTIFICATION BY MASS SPECTROMETRY [LARGE SCALE ANALYSIS]</scope>
    <source>
        <tissue>Brain</tissue>
        <tissue>Heart</tissue>
        <tissue>Kidney</tissue>
        <tissue>Liver</tissue>
        <tissue>Lung</tissue>
        <tissue>Pancreas</tissue>
        <tissue>Spleen</tissue>
        <tissue>Testis</tissue>
    </source>
</reference>
<reference key="4">
    <citation type="journal article" date="2013" name="Mol. Cell">
        <title>SIRT5-mediated lysine desuccinylation impacts diverse metabolic pathways.</title>
        <authorList>
            <person name="Park J."/>
            <person name="Chen Y."/>
            <person name="Tishkoff D.X."/>
            <person name="Peng C."/>
            <person name="Tan M."/>
            <person name="Dai L."/>
            <person name="Xie Z."/>
            <person name="Zhang Y."/>
            <person name="Zwaans B.M."/>
            <person name="Skinner M.E."/>
            <person name="Lombard D.B."/>
            <person name="Zhao Y."/>
        </authorList>
    </citation>
    <scope>SUCCINYLATION [LARGE SCALE ANALYSIS] AT LYS-139</scope>
    <scope>IDENTIFICATION BY MASS SPECTROMETRY [LARGE SCALE ANALYSIS]</scope>
    <source>
        <tissue>Liver</tissue>
    </source>
</reference>
<reference key="5">
    <citation type="journal article" date="2013" name="Proc. Natl. Acad. Sci. U.S.A.">
        <title>Label-free quantitative proteomics of the lysine acetylome in mitochondria identifies substrates of SIRT3 in metabolic pathways.</title>
        <authorList>
            <person name="Rardin M.J."/>
            <person name="Newman J.C."/>
            <person name="Held J.M."/>
            <person name="Cusack M.P."/>
            <person name="Sorensen D.J."/>
            <person name="Li B."/>
            <person name="Schilling B."/>
            <person name="Mooney S.D."/>
            <person name="Kahn C.R."/>
            <person name="Verdin E."/>
            <person name="Gibson B.W."/>
        </authorList>
    </citation>
    <scope>ACETYLATION [LARGE SCALE ANALYSIS] AT LYS-53</scope>
    <scope>IDENTIFICATION BY MASS SPECTROMETRY [LARGE SCALE ANALYSIS]</scope>
    <source>
        <tissue>Liver</tissue>
    </source>
</reference>
<sequence length="207" mass="23275">MALPFARCWKLYRWGTKRWGVPAVESRRGISFKLEEKTAHSSLALFRGDTGVKYGLVGLEPTKVALNLERFREWAVVLGDTTVTSGRHYWEVTVKRSQQFRIGVADVDMSRDSCVGADDRSWVFSYAQRKWHSMLANEKAPIKGIGQPEKVGLLLDYEAKKLSLVDVSRISVIHTLQTDFRGPVAPAFALWDGELLTHSGLEVPKGL</sequence>
<protein>
    <recommendedName>
        <fullName>SPRY domain-containing protein 4</fullName>
    </recommendedName>
</protein>
<comment type="sequence caution" evidence="3">
    <conflict type="frameshift">
        <sequence resource="EMBL-CDS" id="BAB29469"/>
    </conflict>
</comment>
<keyword id="KW-0007">Acetylation</keyword>
<keyword id="KW-1185">Reference proteome</keyword>
<dbReference type="EMBL" id="AK014623">
    <property type="protein sequence ID" value="BAB29469.1"/>
    <property type="status" value="ALT_FRAME"/>
    <property type="molecule type" value="mRNA"/>
</dbReference>
<dbReference type="EMBL" id="AK080726">
    <property type="protein sequence ID" value="BAC37995.1"/>
    <property type="molecule type" value="mRNA"/>
</dbReference>
<dbReference type="EMBL" id="AK082745">
    <property type="protein sequence ID" value="BAC38596.1"/>
    <property type="status" value="ALT_TERM"/>
    <property type="molecule type" value="mRNA"/>
</dbReference>
<dbReference type="EMBL" id="BC014757">
    <property type="protein sequence ID" value="AAH14757.1"/>
    <property type="molecule type" value="mRNA"/>
</dbReference>
<dbReference type="CCDS" id="CCDS24264.1"/>
<dbReference type="RefSeq" id="NP_079992.1">
    <property type="nucleotide sequence ID" value="NM_025716.2"/>
</dbReference>
<dbReference type="SMR" id="Q91WK1"/>
<dbReference type="BioGRID" id="211655">
    <property type="interactions" value="2"/>
</dbReference>
<dbReference type="FunCoup" id="Q91WK1">
    <property type="interactions" value="2612"/>
</dbReference>
<dbReference type="STRING" id="10090.ENSMUSP00000054731"/>
<dbReference type="iPTMnet" id="Q91WK1"/>
<dbReference type="PhosphoSitePlus" id="Q91WK1"/>
<dbReference type="SwissPalm" id="Q91WK1"/>
<dbReference type="jPOST" id="Q91WK1"/>
<dbReference type="PaxDb" id="10090-ENSMUSP00000054731"/>
<dbReference type="PeptideAtlas" id="Q91WK1"/>
<dbReference type="ProteomicsDB" id="261632"/>
<dbReference type="Pumba" id="Q91WK1"/>
<dbReference type="Antibodypedia" id="54497">
    <property type="antibodies" value="40 antibodies from 17 providers"/>
</dbReference>
<dbReference type="DNASU" id="66701"/>
<dbReference type="Ensembl" id="ENSMUST00000061995.10">
    <property type="protein sequence ID" value="ENSMUSP00000054731.9"/>
    <property type="gene ID" value="ENSMUSG00000051346.10"/>
</dbReference>
<dbReference type="GeneID" id="66701"/>
<dbReference type="KEGG" id="mmu:66701"/>
<dbReference type="UCSC" id="uc007hlq.1">
    <property type="organism name" value="mouse"/>
</dbReference>
<dbReference type="AGR" id="MGI:1913951"/>
<dbReference type="CTD" id="283377"/>
<dbReference type="MGI" id="MGI:1913951">
    <property type="gene designation" value="Spryd4"/>
</dbReference>
<dbReference type="VEuPathDB" id="HostDB:ENSMUSG00000051346"/>
<dbReference type="eggNOG" id="KOG2177">
    <property type="taxonomic scope" value="Eukaryota"/>
</dbReference>
<dbReference type="GeneTree" id="ENSGT00940000159780"/>
<dbReference type="HOGENOM" id="CLU_013137_11_0_1"/>
<dbReference type="InParanoid" id="Q91WK1"/>
<dbReference type="OMA" id="WVFGYAQ"/>
<dbReference type="OrthoDB" id="9863247at2759"/>
<dbReference type="PhylomeDB" id="Q91WK1"/>
<dbReference type="TreeFam" id="TF317532"/>
<dbReference type="BioGRID-ORCS" id="66701">
    <property type="hits" value="2 hits in 77 CRISPR screens"/>
</dbReference>
<dbReference type="PRO" id="PR:Q91WK1"/>
<dbReference type="Proteomes" id="UP000000589">
    <property type="component" value="Chromosome 10"/>
</dbReference>
<dbReference type="RNAct" id="Q91WK1">
    <property type="molecule type" value="protein"/>
</dbReference>
<dbReference type="Bgee" id="ENSMUSG00000051346">
    <property type="expression patterns" value="Expressed in soleus muscle and 266 other cell types or tissues"/>
</dbReference>
<dbReference type="GO" id="GO:0005739">
    <property type="term" value="C:mitochondrion"/>
    <property type="evidence" value="ECO:0007005"/>
    <property type="project" value="MGI"/>
</dbReference>
<dbReference type="GO" id="GO:0005634">
    <property type="term" value="C:nucleus"/>
    <property type="evidence" value="ECO:0000250"/>
    <property type="project" value="UniProtKB"/>
</dbReference>
<dbReference type="FunFam" id="2.60.120.920:FF:000047">
    <property type="entry name" value="SPRY domain-containing protein 4"/>
    <property type="match status" value="1"/>
</dbReference>
<dbReference type="Gene3D" id="2.60.120.920">
    <property type="match status" value="1"/>
</dbReference>
<dbReference type="InterPro" id="IPR001870">
    <property type="entry name" value="B30.2/SPRY"/>
</dbReference>
<dbReference type="InterPro" id="IPR043136">
    <property type="entry name" value="B30.2/SPRY_sf"/>
</dbReference>
<dbReference type="InterPro" id="IPR003879">
    <property type="entry name" value="Butyrophylin_SPRY"/>
</dbReference>
<dbReference type="InterPro" id="IPR013320">
    <property type="entry name" value="ConA-like_dom_sf"/>
</dbReference>
<dbReference type="InterPro" id="IPR050617">
    <property type="entry name" value="E3_ligase_FN3/SPRY"/>
</dbReference>
<dbReference type="InterPro" id="IPR003877">
    <property type="entry name" value="SPRY_dom"/>
</dbReference>
<dbReference type="PANTHER" id="PTHR24099:SF16">
    <property type="entry name" value="E3 UBIQUITIN-PROTEIN LIGASE MIDLINE-1-LIKE ISOFORM X1"/>
    <property type="match status" value="1"/>
</dbReference>
<dbReference type="PANTHER" id="PTHR24099">
    <property type="entry name" value="E3 UBIQUITIN-PROTEIN LIGASE TRIM36-RELATED"/>
    <property type="match status" value="1"/>
</dbReference>
<dbReference type="Pfam" id="PF00622">
    <property type="entry name" value="SPRY"/>
    <property type="match status" value="1"/>
</dbReference>
<dbReference type="PRINTS" id="PR01407">
    <property type="entry name" value="BUTYPHLNCDUF"/>
</dbReference>
<dbReference type="SMART" id="SM00449">
    <property type="entry name" value="SPRY"/>
    <property type="match status" value="1"/>
</dbReference>
<dbReference type="SUPFAM" id="SSF49899">
    <property type="entry name" value="Concanavalin A-like lectins/glucanases"/>
    <property type="match status" value="1"/>
</dbReference>
<dbReference type="PROSITE" id="PS50188">
    <property type="entry name" value="B302_SPRY"/>
    <property type="match status" value="1"/>
</dbReference>
<accession>Q91WK1</accession>
<accession>Q8BUS6</accession>
<accession>Q9D651</accession>
<evidence type="ECO:0000250" key="1">
    <source>
        <dbReference type="UniProtKB" id="Q8WW59"/>
    </source>
</evidence>
<evidence type="ECO:0000255" key="2">
    <source>
        <dbReference type="PROSITE-ProRule" id="PRU00548"/>
    </source>
</evidence>
<evidence type="ECO:0000305" key="3"/>
<evidence type="ECO:0007744" key="4">
    <source>
    </source>
</evidence>
<evidence type="ECO:0007744" key="5">
    <source>
    </source>
</evidence>
<feature type="chain" id="PRO_0000240857" description="SPRY domain-containing protein 4">
    <location>
        <begin position="1"/>
        <end position="207"/>
    </location>
</feature>
<feature type="domain" description="B30.2/SPRY" evidence="2">
    <location>
        <begin position="12"/>
        <end position="207"/>
    </location>
</feature>
<feature type="modified residue" description="N6-acetyllysine" evidence="4">
    <location>
        <position position="53"/>
    </location>
</feature>
<feature type="modified residue" description="N6-acetyllysine" evidence="1">
    <location>
        <position position="130"/>
    </location>
</feature>
<feature type="modified residue" description="N6-succinyllysine" evidence="5">
    <location>
        <position position="139"/>
    </location>
</feature>
<feature type="sequence conflict" description="In Ref. 1; BAB29469." evidence="3" ref="1">
    <original>V</original>
    <variation>A</variation>
    <location>
        <position position="21"/>
    </location>
</feature>
<organism>
    <name type="scientific">Mus musculus</name>
    <name type="common">Mouse</name>
    <dbReference type="NCBI Taxonomy" id="10090"/>
    <lineage>
        <taxon>Eukaryota</taxon>
        <taxon>Metazoa</taxon>
        <taxon>Chordata</taxon>
        <taxon>Craniata</taxon>
        <taxon>Vertebrata</taxon>
        <taxon>Euteleostomi</taxon>
        <taxon>Mammalia</taxon>
        <taxon>Eutheria</taxon>
        <taxon>Euarchontoglires</taxon>
        <taxon>Glires</taxon>
        <taxon>Rodentia</taxon>
        <taxon>Myomorpha</taxon>
        <taxon>Muroidea</taxon>
        <taxon>Muridae</taxon>
        <taxon>Murinae</taxon>
        <taxon>Mus</taxon>
        <taxon>Mus</taxon>
    </lineage>
</organism>
<gene>
    <name type="primary">Spryd4</name>
</gene>
<proteinExistence type="evidence at protein level"/>